<protein>
    <recommendedName>
        <fullName evidence="1">Gamma-glutamyl phosphate reductase</fullName>
        <shortName evidence="1">GPR</shortName>
        <ecNumber evidence="1">1.2.1.41</ecNumber>
    </recommendedName>
    <alternativeName>
        <fullName evidence="1">Glutamate-5-semialdehyde dehydrogenase</fullName>
    </alternativeName>
    <alternativeName>
        <fullName evidence="1">Glutamyl-gamma-semialdehyde dehydrogenase</fullName>
        <shortName evidence="1">GSA dehydrogenase</shortName>
    </alternativeName>
</protein>
<keyword id="KW-0028">Amino-acid biosynthesis</keyword>
<keyword id="KW-0963">Cytoplasm</keyword>
<keyword id="KW-0521">NADP</keyword>
<keyword id="KW-0560">Oxidoreductase</keyword>
<keyword id="KW-0641">Proline biosynthesis</keyword>
<keyword id="KW-1185">Reference proteome</keyword>
<comment type="function">
    <text evidence="1">Catalyzes the NADPH-dependent reduction of L-glutamate 5-phosphate into L-glutamate 5-semialdehyde and phosphate. The product spontaneously undergoes cyclization to form 1-pyrroline-5-carboxylate.</text>
</comment>
<comment type="catalytic activity">
    <reaction evidence="1">
        <text>L-glutamate 5-semialdehyde + phosphate + NADP(+) = L-glutamyl 5-phosphate + NADPH + H(+)</text>
        <dbReference type="Rhea" id="RHEA:19541"/>
        <dbReference type="ChEBI" id="CHEBI:15378"/>
        <dbReference type="ChEBI" id="CHEBI:43474"/>
        <dbReference type="ChEBI" id="CHEBI:57783"/>
        <dbReference type="ChEBI" id="CHEBI:58066"/>
        <dbReference type="ChEBI" id="CHEBI:58274"/>
        <dbReference type="ChEBI" id="CHEBI:58349"/>
        <dbReference type="EC" id="1.2.1.41"/>
    </reaction>
</comment>
<comment type="pathway">
    <text evidence="1">Amino-acid biosynthesis; L-proline biosynthesis; L-glutamate 5-semialdehyde from L-glutamate: step 2/2.</text>
</comment>
<comment type="subcellular location">
    <subcellularLocation>
        <location evidence="1">Cytoplasm</location>
    </subcellularLocation>
</comment>
<comment type="similarity">
    <text evidence="1">Belongs to the gamma-glutamyl phosphate reductase family.</text>
</comment>
<dbReference type="EC" id="1.2.1.41" evidence="1"/>
<dbReference type="EMBL" id="CP000267">
    <property type="protein sequence ID" value="ABD68511.1"/>
    <property type="molecule type" value="Genomic_DNA"/>
</dbReference>
<dbReference type="RefSeq" id="WP_011463084.1">
    <property type="nucleotide sequence ID" value="NC_007908.1"/>
</dbReference>
<dbReference type="SMR" id="Q220P2"/>
<dbReference type="STRING" id="338969.Rfer_0761"/>
<dbReference type="KEGG" id="rfr:Rfer_0761"/>
<dbReference type="eggNOG" id="COG0014">
    <property type="taxonomic scope" value="Bacteria"/>
</dbReference>
<dbReference type="HOGENOM" id="CLU_030231_0_0_4"/>
<dbReference type="OrthoDB" id="9809970at2"/>
<dbReference type="UniPathway" id="UPA00098">
    <property type="reaction ID" value="UER00360"/>
</dbReference>
<dbReference type="Proteomes" id="UP000008332">
    <property type="component" value="Chromosome"/>
</dbReference>
<dbReference type="GO" id="GO:0005737">
    <property type="term" value="C:cytoplasm"/>
    <property type="evidence" value="ECO:0007669"/>
    <property type="project" value="UniProtKB-SubCell"/>
</dbReference>
<dbReference type="GO" id="GO:0004350">
    <property type="term" value="F:glutamate-5-semialdehyde dehydrogenase activity"/>
    <property type="evidence" value="ECO:0007669"/>
    <property type="project" value="UniProtKB-UniRule"/>
</dbReference>
<dbReference type="GO" id="GO:0050661">
    <property type="term" value="F:NADP binding"/>
    <property type="evidence" value="ECO:0007669"/>
    <property type="project" value="InterPro"/>
</dbReference>
<dbReference type="GO" id="GO:0055129">
    <property type="term" value="P:L-proline biosynthetic process"/>
    <property type="evidence" value="ECO:0007669"/>
    <property type="project" value="UniProtKB-UniRule"/>
</dbReference>
<dbReference type="CDD" id="cd07079">
    <property type="entry name" value="ALDH_F18-19_ProA-GPR"/>
    <property type="match status" value="1"/>
</dbReference>
<dbReference type="FunFam" id="3.40.309.10:FF:000006">
    <property type="entry name" value="Gamma-glutamyl phosphate reductase"/>
    <property type="match status" value="1"/>
</dbReference>
<dbReference type="Gene3D" id="3.40.605.10">
    <property type="entry name" value="Aldehyde Dehydrogenase, Chain A, domain 1"/>
    <property type="match status" value="1"/>
</dbReference>
<dbReference type="Gene3D" id="3.40.309.10">
    <property type="entry name" value="Aldehyde Dehydrogenase, Chain A, domain 2"/>
    <property type="match status" value="1"/>
</dbReference>
<dbReference type="HAMAP" id="MF_00412">
    <property type="entry name" value="ProA"/>
    <property type="match status" value="1"/>
</dbReference>
<dbReference type="InterPro" id="IPR016161">
    <property type="entry name" value="Ald_DH/histidinol_DH"/>
</dbReference>
<dbReference type="InterPro" id="IPR016163">
    <property type="entry name" value="Ald_DH_C"/>
</dbReference>
<dbReference type="InterPro" id="IPR016162">
    <property type="entry name" value="Ald_DH_N"/>
</dbReference>
<dbReference type="InterPro" id="IPR015590">
    <property type="entry name" value="Aldehyde_DH_dom"/>
</dbReference>
<dbReference type="InterPro" id="IPR020593">
    <property type="entry name" value="G-glutamylP_reductase_CS"/>
</dbReference>
<dbReference type="InterPro" id="IPR012134">
    <property type="entry name" value="Glu-5-SA_DH"/>
</dbReference>
<dbReference type="InterPro" id="IPR000965">
    <property type="entry name" value="GPR_dom"/>
</dbReference>
<dbReference type="NCBIfam" id="NF001221">
    <property type="entry name" value="PRK00197.1"/>
    <property type="match status" value="1"/>
</dbReference>
<dbReference type="NCBIfam" id="TIGR00407">
    <property type="entry name" value="proA"/>
    <property type="match status" value="1"/>
</dbReference>
<dbReference type="PANTHER" id="PTHR11063:SF8">
    <property type="entry name" value="DELTA-1-PYRROLINE-5-CARBOXYLATE SYNTHASE"/>
    <property type="match status" value="1"/>
</dbReference>
<dbReference type="PANTHER" id="PTHR11063">
    <property type="entry name" value="GLUTAMATE SEMIALDEHYDE DEHYDROGENASE"/>
    <property type="match status" value="1"/>
</dbReference>
<dbReference type="Pfam" id="PF00171">
    <property type="entry name" value="Aldedh"/>
    <property type="match status" value="2"/>
</dbReference>
<dbReference type="PIRSF" id="PIRSF000151">
    <property type="entry name" value="GPR"/>
    <property type="match status" value="1"/>
</dbReference>
<dbReference type="SUPFAM" id="SSF53720">
    <property type="entry name" value="ALDH-like"/>
    <property type="match status" value="1"/>
</dbReference>
<dbReference type="PROSITE" id="PS01223">
    <property type="entry name" value="PROA"/>
    <property type="match status" value="1"/>
</dbReference>
<evidence type="ECO:0000255" key="1">
    <source>
        <dbReference type="HAMAP-Rule" id="MF_00412"/>
    </source>
</evidence>
<reference key="1">
    <citation type="submission" date="2006-02" db="EMBL/GenBank/DDBJ databases">
        <title>Complete sequence of chromosome of Rhodoferax ferrireducens DSM 15236.</title>
        <authorList>
            <person name="Copeland A."/>
            <person name="Lucas S."/>
            <person name="Lapidus A."/>
            <person name="Barry K."/>
            <person name="Detter J.C."/>
            <person name="Glavina del Rio T."/>
            <person name="Hammon N."/>
            <person name="Israni S."/>
            <person name="Pitluck S."/>
            <person name="Brettin T."/>
            <person name="Bruce D."/>
            <person name="Han C."/>
            <person name="Tapia R."/>
            <person name="Gilna P."/>
            <person name="Kiss H."/>
            <person name="Schmutz J."/>
            <person name="Larimer F."/>
            <person name="Land M."/>
            <person name="Kyrpides N."/>
            <person name="Ivanova N."/>
            <person name="Richardson P."/>
        </authorList>
    </citation>
    <scope>NUCLEOTIDE SEQUENCE [LARGE SCALE GENOMIC DNA]</scope>
    <source>
        <strain>ATCC BAA-621 / DSM 15236 / T118</strain>
    </source>
</reference>
<feature type="chain" id="PRO_0000252587" description="Gamma-glutamyl phosphate reductase">
    <location>
        <begin position="1"/>
        <end position="444"/>
    </location>
</feature>
<sequence>MIPLNTTDYANALGLKAKQASALMARAPTATKNAALRKLAGLLRANVNALQIDNARDIERAVQSGLAAPMVDRLKLSPQVIETCAQGCEQLAGMADVIGEIIGMKQQPSGIRVGQMRVPIGVFGMIFESRPNVTIEAASLSIKSGNACILRGGSEAIESNKALARLVQQALTESGLPAEAVQLVQTTDRAVVGQLITMPQYVDVIIPRGGKGLIERISRDAKVPVIKHLDGNCHTYVDDPCDIAMAVKVADNAKTNKYSPCNATESLLVARAVAAEFLPSIGRVYAAKGVEMRCDPQALAIFKENQPVAPVNIGHDAIDSAVELKPVLVLAQESDWFEEYLAPIISIKVVAGVDEAIAHINRYSSHHTDAILTRDHMHAQQFLREVDSASVMVNTSTRFADGFEYGLGAEIGISTDKFHARGPVGIEGLTSLKYVVLGDGEIRA</sequence>
<accession>Q220P2</accession>
<gene>
    <name evidence="1" type="primary">proA</name>
    <name type="ordered locus">Rfer_0761</name>
</gene>
<proteinExistence type="inferred from homology"/>
<name>PROA_ALBFT</name>
<organism>
    <name type="scientific">Albidiferax ferrireducens (strain ATCC BAA-621 / DSM 15236 / T118)</name>
    <name type="common">Rhodoferax ferrireducens</name>
    <dbReference type="NCBI Taxonomy" id="338969"/>
    <lineage>
        <taxon>Bacteria</taxon>
        <taxon>Pseudomonadati</taxon>
        <taxon>Pseudomonadota</taxon>
        <taxon>Betaproteobacteria</taxon>
        <taxon>Burkholderiales</taxon>
        <taxon>Comamonadaceae</taxon>
        <taxon>Rhodoferax</taxon>
    </lineage>
</organism>